<proteinExistence type="evidence at protein level"/>
<sequence>GIPCGESCVWIPCLTSAIGCSCKSKVCYRD</sequence>
<accession>P85183</accession>
<reference evidence="4" key="1">
    <citation type="journal article" date="2006" name="Biochem. J.">
        <title>A novel suite of cyclotides from Viola odorata: sequence variation and the implications for structure, function and stability.</title>
        <authorList>
            <person name="Ireland D.C."/>
            <person name="Colgrave M.L."/>
            <person name="Craik D.J."/>
        </authorList>
    </citation>
    <scope>PROTEIN SEQUENCE</scope>
    <scope>MASS SPECTROMETRY</scope>
</reference>
<comment type="function">
    <text evidence="4">Probably participates in a plant defense mechanism.</text>
</comment>
<comment type="domain">
    <text evidence="1">The presence of a 'disulfide through disulfide knot' structurally defines this protein as a knottin.</text>
</comment>
<comment type="PTM">
    <text evidence="2 3">This is a cyclic peptide.</text>
</comment>
<comment type="mass spectrometry"/>
<comment type="similarity">
    <text evidence="2">Belongs to the cyclotide family. Bracelet subfamily.</text>
</comment>
<comment type="caution">
    <text evidence="3">This peptide is cyclic. The start position was chosen by similarity to OAK1 (kalata-B1) for which the DNA sequence is known.</text>
</comment>
<dbReference type="SMR" id="P85183"/>
<dbReference type="GO" id="GO:0006952">
    <property type="term" value="P:defense response"/>
    <property type="evidence" value="ECO:0007669"/>
    <property type="project" value="UniProtKB-KW"/>
</dbReference>
<dbReference type="InterPro" id="IPR005535">
    <property type="entry name" value="Cyclotide"/>
</dbReference>
<dbReference type="InterPro" id="IPR012323">
    <property type="entry name" value="Cyclotide_bracelet_CS"/>
</dbReference>
<dbReference type="InterPro" id="IPR036146">
    <property type="entry name" value="Cyclotide_sf"/>
</dbReference>
<dbReference type="Pfam" id="PF03784">
    <property type="entry name" value="Cyclotide"/>
    <property type="match status" value="1"/>
</dbReference>
<dbReference type="PIRSF" id="PIRSF037891">
    <property type="entry name" value="Cycloviolacin"/>
    <property type="match status" value="1"/>
</dbReference>
<dbReference type="SUPFAM" id="SSF57038">
    <property type="entry name" value="Cyclotides"/>
    <property type="match status" value="1"/>
</dbReference>
<dbReference type="PROSITE" id="PS51052">
    <property type="entry name" value="CYCLOTIDE"/>
    <property type="match status" value="1"/>
</dbReference>
<dbReference type="PROSITE" id="PS60008">
    <property type="entry name" value="CYCLOTIDE_BRACELET"/>
    <property type="match status" value="1"/>
</dbReference>
<evidence type="ECO:0000250" key="1">
    <source>
        <dbReference type="UniProtKB" id="P56871"/>
    </source>
</evidence>
<evidence type="ECO:0000255" key="2">
    <source>
        <dbReference type="PROSITE-ProRule" id="PRU00395"/>
    </source>
</evidence>
<evidence type="ECO:0000269" key="3">
    <source>
    </source>
</evidence>
<evidence type="ECO:0000305" key="4"/>
<feature type="peptide" id="PRO_0000294949" description="Cycloviolacin-O20" evidence="2 3">
    <location>
        <begin position="1"/>
        <end position="30"/>
    </location>
</feature>
<feature type="disulfide bond" evidence="1 2">
    <location>
        <begin position="4"/>
        <end position="20"/>
    </location>
</feature>
<feature type="disulfide bond" evidence="1 2">
    <location>
        <begin position="8"/>
        <end position="22"/>
    </location>
</feature>
<feature type="disulfide bond" evidence="1 2">
    <location>
        <begin position="13"/>
        <end position="27"/>
    </location>
</feature>
<feature type="cross-link" description="Cyclopeptide (Gly-Asp)" evidence="3">
    <location>
        <begin position="1"/>
        <end position="30"/>
    </location>
</feature>
<name>CYO20_VIOOD</name>
<organism>
    <name type="scientific">Viola odorata</name>
    <name type="common">Sweet violet</name>
    <dbReference type="NCBI Taxonomy" id="97441"/>
    <lineage>
        <taxon>Eukaryota</taxon>
        <taxon>Viridiplantae</taxon>
        <taxon>Streptophyta</taxon>
        <taxon>Embryophyta</taxon>
        <taxon>Tracheophyta</taxon>
        <taxon>Spermatophyta</taxon>
        <taxon>Magnoliopsida</taxon>
        <taxon>eudicotyledons</taxon>
        <taxon>Gunneridae</taxon>
        <taxon>Pentapetalae</taxon>
        <taxon>rosids</taxon>
        <taxon>fabids</taxon>
        <taxon>Malpighiales</taxon>
        <taxon>Violaceae</taxon>
        <taxon>Viola</taxon>
        <taxon>Viola subgen. Viola</taxon>
        <taxon>Viola sect. Viola</taxon>
        <taxon>Viola subsect. Viola</taxon>
    </lineage>
</organism>
<keyword id="KW-0903">Direct protein sequencing</keyword>
<keyword id="KW-1015">Disulfide bond</keyword>
<keyword id="KW-0960">Knottin</keyword>
<keyword id="KW-0611">Plant defense</keyword>
<protein>
    <recommendedName>
        <fullName>Cycloviolacin-O20</fullName>
    </recommendedName>
</protein>